<reference key="1">
    <citation type="submission" date="2008-03" db="EMBL/GenBank/DDBJ databases">
        <title>Complete sequence of chromosome of Methylobacterium radiotolerans JCM 2831.</title>
        <authorList>
            <consortium name="US DOE Joint Genome Institute"/>
            <person name="Copeland A."/>
            <person name="Lucas S."/>
            <person name="Lapidus A."/>
            <person name="Glavina del Rio T."/>
            <person name="Dalin E."/>
            <person name="Tice H."/>
            <person name="Bruce D."/>
            <person name="Goodwin L."/>
            <person name="Pitluck S."/>
            <person name="Kiss H."/>
            <person name="Brettin T."/>
            <person name="Detter J.C."/>
            <person name="Han C."/>
            <person name="Kuske C.R."/>
            <person name="Schmutz J."/>
            <person name="Larimer F."/>
            <person name="Land M."/>
            <person name="Hauser L."/>
            <person name="Kyrpides N."/>
            <person name="Mikhailova N."/>
            <person name="Marx C.J."/>
            <person name="Richardson P."/>
        </authorList>
    </citation>
    <scope>NUCLEOTIDE SEQUENCE [LARGE SCALE GENOMIC DNA]</scope>
    <source>
        <strain>ATCC 27329 / DSM 1819 / JCM 2831 / NBRC 15690 / NCIMB 10815 / 0-1</strain>
    </source>
</reference>
<evidence type="ECO:0000255" key="1">
    <source>
        <dbReference type="HAMAP-Rule" id="MF_00046"/>
    </source>
</evidence>
<proteinExistence type="inferred from homology"/>
<organism>
    <name type="scientific">Methylobacterium radiotolerans (strain ATCC 27329 / DSM 1819 / JCM 2831 / NBRC 15690 / NCIMB 10815 / 0-1)</name>
    <dbReference type="NCBI Taxonomy" id="426355"/>
    <lineage>
        <taxon>Bacteria</taxon>
        <taxon>Pseudomonadati</taxon>
        <taxon>Pseudomonadota</taxon>
        <taxon>Alphaproteobacteria</taxon>
        <taxon>Hyphomicrobiales</taxon>
        <taxon>Methylobacteriaceae</taxon>
        <taxon>Methylobacterium</taxon>
    </lineage>
</organism>
<accession>B1LXZ3</accession>
<protein>
    <recommendedName>
        <fullName evidence="1">UDP-N-acetylmuramate--L-alanine ligase</fullName>
        <ecNumber evidence="1">6.3.2.8</ecNumber>
    </recommendedName>
    <alternativeName>
        <fullName evidence="1">UDP-N-acetylmuramoyl-L-alanine synthetase</fullName>
    </alternativeName>
</protein>
<sequence>MKLPDKLGPIHFIGIGGIGMSGIAEVMHNLGYTVQGSDASDNANVRRLAEKGMRTFVGHDAKNVEEAALVVVSTAIRRDNPELQAARERRLPVVRRAEMLAELMRFKSCVAIAGTHGKTTTTSLVATLLDAGNLDPTVINGGIINAYGTNARMGAGEWMVVEADESDGTFLKLPADVAIVTNIDPEHLDHFGSFDAIKDAFRRFIDNIPFYGFAVMCIDHPVVQDLVGHIEDRRIITYGENPQADVRLIDVDLRGGQSRFRVMIRDRRPGYRMEMEDLVLPMPGKHNALNATAALAVAHELGVKPDAIRQALAGFGGVKRRFTRTGEWNGATIFDDYGHHPVEIKAVLKAARASTEHGVIAVVQPHRYTRLQSLFDDFCTCFNDADTVIVAPVYAAGEQPIEGFDRDSLVAGLRSRGHRDARALERPEELAGIIADLAKPGDYVVCLGAGTITQWAYALPDELTARGR</sequence>
<comment type="function">
    <text evidence="1">Cell wall formation.</text>
</comment>
<comment type="catalytic activity">
    <reaction evidence="1">
        <text>UDP-N-acetyl-alpha-D-muramate + L-alanine + ATP = UDP-N-acetyl-alpha-D-muramoyl-L-alanine + ADP + phosphate + H(+)</text>
        <dbReference type="Rhea" id="RHEA:23372"/>
        <dbReference type="ChEBI" id="CHEBI:15378"/>
        <dbReference type="ChEBI" id="CHEBI:30616"/>
        <dbReference type="ChEBI" id="CHEBI:43474"/>
        <dbReference type="ChEBI" id="CHEBI:57972"/>
        <dbReference type="ChEBI" id="CHEBI:70757"/>
        <dbReference type="ChEBI" id="CHEBI:83898"/>
        <dbReference type="ChEBI" id="CHEBI:456216"/>
        <dbReference type="EC" id="6.3.2.8"/>
    </reaction>
</comment>
<comment type="pathway">
    <text evidence="1">Cell wall biogenesis; peptidoglycan biosynthesis.</text>
</comment>
<comment type="subcellular location">
    <subcellularLocation>
        <location evidence="1">Cytoplasm</location>
    </subcellularLocation>
</comment>
<comment type="similarity">
    <text evidence="1">Belongs to the MurCDEF family.</text>
</comment>
<gene>
    <name evidence="1" type="primary">murC</name>
    <name type="ordered locus">Mrad2831_2355</name>
</gene>
<dbReference type="EC" id="6.3.2.8" evidence="1"/>
<dbReference type="EMBL" id="CP001001">
    <property type="protein sequence ID" value="ACB24350.1"/>
    <property type="molecule type" value="Genomic_DNA"/>
</dbReference>
<dbReference type="RefSeq" id="WP_012319323.1">
    <property type="nucleotide sequence ID" value="NC_010505.1"/>
</dbReference>
<dbReference type="SMR" id="B1LXZ3"/>
<dbReference type="STRING" id="426355.Mrad2831_2355"/>
<dbReference type="GeneID" id="6138387"/>
<dbReference type="KEGG" id="mrd:Mrad2831_2355"/>
<dbReference type="PATRIC" id="fig|426355.14.peg.2422"/>
<dbReference type="eggNOG" id="COG0773">
    <property type="taxonomic scope" value="Bacteria"/>
</dbReference>
<dbReference type="HOGENOM" id="CLU_028104_2_2_5"/>
<dbReference type="OrthoDB" id="9804126at2"/>
<dbReference type="UniPathway" id="UPA00219"/>
<dbReference type="Proteomes" id="UP000006589">
    <property type="component" value="Chromosome"/>
</dbReference>
<dbReference type="GO" id="GO:0005737">
    <property type="term" value="C:cytoplasm"/>
    <property type="evidence" value="ECO:0007669"/>
    <property type="project" value="UniProtKB-SubCell"/>
</dbReference>
<dbReference type="GO" id="GO:0005524">
    <property type="term" value="F:ATP binding"/>
    <property type="evidence" value="ECO:0007669"/>
    <property type="project" value="UniProtKB-UniRule"/>
</dbReference>
<dbReference type="GO" id="GO:0008763">
    <property type="term" value="F:UDP-N-acetylmuramate-L-alanine ligase activity"/>
    <property type="evidence" value="ECO:0007669"/>
    <property type="project" value="UniProtKB-UniRule"/>
</dbReference>
<dbReference type="GO" id="GO:0051301">
    <property type="term" value="P:cell division"/>
    <property type="evidence" value="ECO:0007669"/>
    <property type="project" value="UniProtKB-KW"/>
</dbReference>
<dbReference type="GO" id="GO:0071555">
    <property type="term" value="P:cell wall organization"/>
    <property type="evidence" value="ECO:0007669"/>
    <property type="project" value="UniProtKB-KW"/>
</dbReference>
<dbReference type="GO" id="GO:0009252">
    <property type="term" value="P:peptidoglycan biosynthetic process"/>
    <property type="evidence" value="ECO:0007669"/>
    <property type="project" value="UniProtKB-UniRule"/>
</dbReference>
<dbReference type="GO" id="GO:0008360">
    <property type="term" value="P:regulation of cell shape"/>
    <property type="evidence" value="ECO:0007669"/>
    <property type="project" value="UniProtKB-KW"/>
</dbReference>
<dbReference type="Gene3D" id="3.90.190.20">
    <property type="entry name" value="Mur ligase, C-terminal domain"/>
    <property type="match status" value="1"/>
</dbReference>
<dbReference type="Gene3D" id="3.40.1190.10">
    <property type="entry name" value="Mur-like, catalytic domain"/>
    <property type="match status" value="1"/>
</dbReference>
<dbReference type="Gene3D" id="3.40.50.720">
    <property type="entry name" value="NAD(P)-binding Rossmann-like Domain"/>
    <property type="match status" value="1"/>
</dbReference>
<dbReference type="HAMAP" id="MF_00046">
    <property type="entry name" value="MurC"/>
    <property type="match status" value="1"/>
</dbReference>
<dbReference type="InterPro" id="IPR036565">
    <property type="entry name" value="Mur-like_cat_sf"/>
</dbReference>
<dbReference type="InterPro" id="IPR004101">
    <property type="entry name" value="Mur_ligase_C"/>
</dbReference>
<dbReference type="InterPro" id="IPR036615">
    <property type="entry name" value="Mur_ligase_C_dom_sf"/>
</dbReference>
<dbReference type="InterPro" id="IPR013221">
    <property type="entry name" value="Mur_ligase_cen"/>
</dbReference>
<dbReference type="InterPro" id="IPR000713">
    <property type="entry name" value="Mur_ligase_N"/>
</dbReference>
<dbReference type="InterPro" id="IPR050061">
    <property type="entry name" value="MurCDEF_pg_biosynth"/>
</dbReference>
<dbReference type="InterPro" id="IPR005758">
    <property type="entry name" value="UDP-N-AcMur_Ala_ligase_MurC"/>
</dbReference>
<dbReference type="NCBIfam" id="TIGR01082">
    <property type="entry name" value="murC"/>
    <property type="match status" value="1"/>
</dbReference>
<dbReference type="PANTHER" id="PTHR43445:SF3">
    <property type="entry name" value="UDP-N-ACETYLMURAMATE--L-ALANINE LIGASE"/>
    <property type="match status" value="1"/>
</dbReference>
<dbReference type="PANTHER" id="PTHR43445">
    <property type="entry name" value="UDP-N-ACETYLMURAMATE--L-ALANINE LIGASE-RELATED"/>
    <property type="match status" value="1"/>
</dbReference>
<dbReference type="Pfam" id="PF01225">
    <property type="entry name" value="Mur_ligase"/>
    <property type="match status" value="1"/>
</dbReference>
<dbReference type="Pfam" id="PF02875">
    <property type="entry name" value="Mur_ligase_C"/>
    <property type="match status" value="1"/>
</dbReference>
<dbReference type="Pfam" id="PF08245">
    <property type="entry name" value="Mur_ligase_M"/>
    <property type="match status" value="1"/>
</dbReference>
<dbReference type="SUPFAM" id="SSF51984">
    <property type="entry name" value="MurCD N-terminal domain"/>
    <property type="match status" value="1"/>
</dbReference>
<dbReference type="SUPFAM" id="SSF53623">
    <property type="entry name" value="MurD-like peptide ligases, catalytic domain"/>
    <property type="match status" value="1"/>
</dbReference>
<dbReference type="SUPFAM" id="SSF53244">
    <property type="entry name" value="MurD-like peptide ligases, peptide-binding domain"/>
    <property type="match status" value="1"/>
</dbReference>
<name>MURC_METRJ</name>
<keyword id="KW-0067">ATP-binding</keyword>
<keyword id="KW-0131">Cell cycle</keyword>
<keyword id="KW-0132">Cell division</keyword>
<keyword id="KW-0133">Cell shape</keyword>
<keyword id="KW-0961">Cell wall biogenesis/degradation</keyword>
<keyword id="KW-0963">Cytoplasm</keyword>
<keyword id="KW-0436">Ligase</keyword>
<keyword id="KW-0547">Nucleotide-binding</keyword>
<keyword id="KW-0573">Peptidoglycan synthesis</keyword>
<feature type="chain" id="PRO_1000091116" description="UDP-N-acetylmuramate--L-alanine ligase">
    <location>
        <begin position="1"/>
        <end position="468"/>
    </location>
</feature>
<feature type="binding site" evidence="1">
    <location>
        <begin position="114"/>
        <end position="120"/>
    </location>
    <ligand>
        <name>ATP</name>
        <dbReference type="ChEBI" id="CHEBI:30616"/>
    </ligand>
</feature>